<dbReference type="EC" id="6.1.1.1" evidence="1"/>
<dbReference type="EMBL" id="CP001403">
    <property type="protein sequence ID" value="ACP46417.1"/>
    <property type="molecule type" value="Genomic_DNA"/>
</dbReference>
<dbReference type="RefSeq" id="WP_012714152.1">
    <property type="nucleotide sequence ID" value="NC_012622.1"/>
</dbReference>
<dbReference type="SMR" id="C3N8R2"/>
<dbReference type="KEGG" id="siy:YG5714_2168"/>
<dbReference type="HOGENOM" id="CLU_035267_1_1_2"/>
<dbReference type="Proteomes" id="UP000002308">
    <property type="component" value="Chromosome"/>
</dbReference>
<dbReference type="GO" id="GO:0005737">
    <property type="term" value="C:cytoplasm"/>
    <property type="evidence" value="ECO:0007669"/>
    <property type="project" value="UniProtKB-SubCell"/>
</dbReference>
<dbReference type="GO" id="GO:0005524">
    <property type="term" value="F:ATP binding"/>
    <property type="evidence" value="ECO:0007669"/>
    <property type="project" value="UniProtKB-UniRule"/>
</dbReference>
<dbReference type="GO" id="GO:0004831">
    <property type="term" value="F:tyrosine-tRNA ligase activity"/>
    <property type="evidence" value="ECO:0007669"/>
    <property type="project" value="UniProtKB-UniRule"/>
</dbReference>
<dbReference type="GO" id="GO:0006437">
    <property type="term" value="P:tyrosyl-tRNA aminoacylation"/>
    <property type="evidence" value="ECO:0007669"/>
    <property type="project" value="UniProtKB-UniRule"/>
</dbReference>
<dbReference type="CDD" id="cd00805">
    <property type="entry name" value="TyrRS_core"/>
    <property type="match status" value="1"/>
</dbReference>
<dbReference type="Gene3D" id="3.40.50.620">
    <property type="entry name" value="HUPs"/>
    <property type="match status" value="1"/>
</dbReference>
<dbReference type="Gene3D" id="1.10.240.10">
    <property type="entry name" value="Tyrosyl-Transfer RNA Synthetase"/>
    <property type="match status" value="1"/>
</dbReference>
<dbReference type="HAMAP" id="MF_02009">
    <property type="entry name" value="Tyr_tRNA_synth_type4"/>
    <property type="match status" value="1"/>
</dbReference>
<dbReference type="InterPro" id="IPR002305">
    <property type="entry name" value="aa-tRNA-synth_Ic"/>
</dbReference>
<dbReference type="InterPro" id="IPR014729">
    <property type="entry name" value="Rossmann-like_a/b/a_fold"/>
</dbReference>
<dbReference type="InterPro" id="IPR002307">
    <property type="entry name" value="Tyr-tRNA-ligase"/>
</dbReference>
<dbReference type="InterPro" id="IPR023678">
    <property type="entry name" value="Tyr-tRNA-ligase_4"/>
</dbReference>
<dbReference type="InterPro" id="IPR023617">
    <property type="entry name" value="Tyr-tRNA-ligase_arc/euk-type"/>
</dbReference>
<dbReference type="InterPro" id="IPR050489">
    <property type="entry name" value="Tyr-tRNA_synthase"/>
</dbReference>
<dbReference type="NCBIfam" id="NF006330">
    <property type="entry name" value="PRK08560.1"/>
    <property type="match status" value="1"/>
</dbReference>
<dbReference type="NCBIfam" id="TIGR00234">
    <property type="entry name" value="tyrS"/>
    <property type="match status" value="1"/>
</dbReference>
<dbReference type="PANTHER" id="PTHR46264:SF4">
    <property type="entry name" value="TYROSINE--TRNA LIGASE, CYTOPLASMIC"/>
    <property type="match status" value="1"/>
</dbReference>
<dbReference type="PANTHER" id="PTHR46264">
    <property type="entry name" value="TYROSINE-TRNA LIGASE"/>
    <property type="match status" value="1"/>
</dbReference>
<dbReference type="Pfam" id="PF00579">
    <property type="entry name" value="tRNA-synt_1b"/>
    <property type="match status" value="1"/>
</dbReference>
<dbReference type="PIRSF" id="PIRSF006588">
    <property type="entry name" value="TyrRS_arch_euk"/>
    <property type="match status" value="1"/>
</dbReference>
<dbReference type="PRINTS" id="PR01040">
    <property type="entry name" value="TRNASYNTHTYR"/>
</dbReference>
<dbReference type="SUPFAM" id="SSF52374">
    <property type="entry name" value="Nucleotidylyl transferase"/>
    <property type="match status" value="1"/>
</dbReference>
<feature type="chain" id="PRO_1000216405" description="Tyrosine--tRNA ligase">
    <location>
        <begin position="1"/>
        <end position="361"/>
    </location>
</feature>
<feature type="short sequence motif" description="'KMSKS' region">
    <location>
        <begin position="236"/>
        <end position="240"/>
    </location>
</feature>
<feature type="binding site" evidence="1">
    <location>
        <position position="36"/>
    </location>
    <ligand>
        <name>L-tyrosine</name>
        <dbReference type="ChEBI" id="CHEBI:58315"/>
    </ligand>
</feature>
<feature type="binding site" evidence="1">
    <location>
        <position position="162"/>
    </location>
    <ligand>
        <name>L-tyrosine</name>
        <dbReference type="ChEBI" id="CHEBI:58315"/>
    </ligand>
</feature>
<feature type="binding site" evidence="1">
    <location>
        <position position="166"/>
    </location>
    <ligand>
        <name>L-tyrosine</name>
        <dbReference type="ChEBI" id="CHEBI:58315"/>
    </ligand>
</feature>
<feature type="binding site" evidence="1">
    <location>
        <position position="169"/>
    </location>
    <ligand>
        <name>L-tyrosine</name>
        <dbReference type="ChEBI" id="CHEBI:58315"/>
    </ligand>
</feature>
<feature type="binding site" evidence="1">
    <location>
        <position position="184"/>
    </location>
    <ligand>
        <name>L-tyrosine</name>
        <dbReference type="ChEBI" id="CHEBI:58315"/>
    </ligand>
</feature>
<feature type="binding site" evidence="1">
    <location>
        <position position="239"/>
    </location>
    <ligand>
        <name>ATP</name>
        <dbReference type="ChEBI" id="CHEBI:30616"/>
    </ligand>
</feature>
<organism>
    <name type="scientific">Saccharolobus islandicus (strain Y.G.57.14 / Yellowstone #1)</name>
    <name type="common">Sulfolobus islandicus</name>
    <dbReference type="NCBI Taxonomy" id="439386"/>
    <lineage>
        <taxon>Archaea</taxon>
        <taxon>Thermoproteota</taxon>
        <taxon>Thermoprotei</taxon>
        <taxon>Sulfolobales</taxon>
        <taxon>Sulfolobaceae</taxon>
        <taxon>Saccharolobus</taxon>
    </lineage>
</organism>
<evidence type="ECO:0000255" key="1">
    <source>
        <dbReference type="HAMAP-Rule" id="MF_02009"/>
    </source>
</evidence>
<gene>
    <name evidence="1" type="primary">tyrS</name>
    <name type="ordered locus">YG5714_2168</name>
</gene>
<sequence>MSIDQRLQLITRNAAEIITIDELRKKLESEEKLKGYIGFEPSGLFHIGWLIWTQKVKDLVEAGVNMTLLRATWHAWINDKLGGDLSLIKMAADYTVEVIKNYGVDTTKLNIVDADDMVKEKDYWALVIKVAKNASLARIKRALTIMGRRAEEAEIDASKLIYPAMQVSDIFYLDLDIALGGTDQRKAHMLARDVAEKMGKKKIVSIHTPLLVGLQGGQRMSITEGMEEDDIQAEIKMSKSKPESAIFVSDSREDVERKIMGAYCPKGVAENNPILQILKYIIFPRYNFVKIERDIRYGGDVEFKDYEELERAYIEGKIHPMDLKKATARRLNEILEPIRKSLERKPEFEEMIQKISKSVTR</sequence>
<comment type="function">
    <text evidence="1">Catalyzes the attachment of tyrosine to tRNA(Tyr) in a two-step reaction: tyrosine is first activated by ATP to form Tyr-AMP and then transferred to the acceptor end of tRNA(Tyr).</text>
</comment>
<comment type="catalytic activity">
    <reaction evidence="1">
        <text>tRNA(Tyr) + L-tyrosine + ATP = L-tyrosyl-tRNA(Tyr) + AMP + diphosphate + H(+)</text>
        <dbReference type="Rhea" id="RHEA:10220"/>
        <dbReference type="Rhea" id="RHEA-COMP:9706"/>
        <dbReference type="Rhea" id="RHEA-COMP:9707"/>
        <dbReference type="ChEBI" id="CHEBI:15378"/>
        <dbReference type="ChEBI" id="CHEBI:30616"/>
        <dbReference type="ChEBI" id="CHEBI:33019"/>
        <dbReference type="ChEBI" id="CHEBI:58315"/>
        <dbReference type="ChEBI" id="CHEBI:78442"/>
        <dbReference type="ChEBI" id="CHEBI:78536"/>
        <dbReference type="ChEBI" id="CHEBI:456215"/>
        <dbReference type="EC" id="6.1.1.1"/>
    </reaction>
</comment>
<comment type="subunit">
    <text evidence="1">Homodimer.</text>
</comment>
<comment type="subcellular location">
    <subcellularLocation>
        <location evidence="1">Cytoplasm</location>
    </subcellularLocation>
</comment>
<comment type="similarity">
    <text evidence="1">Belongs to the class-I aminoacyl-tRNA synthetase family. TyrS type 4 subfamily.</text>
</comment>
<name>SYY_SACI7</name>
<protein>
    <recommendedName>
        <fullName evidence="1">Tyrosine--tRNA ligase</fullName>
        <ecNumber evidence="1">6.1.1.1</ecNumber>
    </recommendedName>
    <alternativeName>
        <fullName evidence="1">Tyrosyl-tRNA synthetase</fullName>
        <shortName evidence="1">TyrRS</shortName>
    </alternativeName>
</protein>
<accession>C3N8R2</accession>
<reference key="1">
    <citation type="journal article" date="2009" name="Proc. Natl. Acad. Sci. U.S.A.">
        <title>Biogeography of the Sulfolobus islandicus pan-genome.</title>
        <authorList>
            <person name="Reno M.L."/>
            <person name="Held N.L."/>
            <person name="Fields C.J."/>
            <person name="Burke P.V."/>
            <person name="Whitaker R.J."/>
        </authorList>
    </citation>
    <scope>NUCLEOTIDE SEQUENCE [LARGE SCALE GENOMIC DNA]</scope>
    <source>
        <strain>Y.G.57.14 / Yellowstone #1</strain>
    </source>
</reference>
<proteinExistence type="inferred from homology"/>
<keyword id="KW-0030">Aminoacyl-tRNA synthetase</keyword>
<keyword id="KW-0067">ATP-binding</keyword>
<keyword id="KW-0963">Cytoplasm</keyword>
<keyword id="KW-0436">Ligase</keyword>
<keyword id="KW-0547">Nucleotide-binding</keyword>
<keyword id="KW-0648">Protein biosynthesis</keyword>